<protein>
    <recommendedName>
        <fullName evidence="1">ATP synthase subunit beta</fullName>
        <ecNumber evidence="1">7.1.2.2</ecNumber>
    </recommendedName>
    <alternativeName>
        <fullName evidence="1">ATP synthase F1 sector subunit beta</fullName>
    </alternativeName>
    <alternativeName>
        <fullName evidence="1">F-ATPase subunit beta</fullName>
    </alternativeName>
</protein>
<keyword id="KW-0066">ATP synthesis</keyword>
<keyword id="KW-0067">ATP-binding</keyword>
<keyword id="KW-0997">Cell inner membrane</keyword>
<keyword id="KW-1003">Cell membrane</keyword>
<keyword id="KW-0139">CF(1)</keyword>
<keyword id="KW-0375">Hydrogen ion transport</keyword>
<keyword id="KW-0406">Ion transport</keyword>
<keyword id="KW-0472">Membrane</keyword>
<keyword id="KW-0547">Nucleotide-binding</keyword>
<keyword id="KW-1278">Translocase</keyword>
<keyword id="KW-0813">Transport</keyword>
<gene>
    <name evidence="1" type="primary">atpD</name>
    <name type="ordered locus">TRQ2_1273</name>
</gene>
<comment type="function">
    <text evidence="1">Produces ATP from ADP in the presence of a proton gradient across the membrane. The catalytic sites are hosted primarily by the beta subunits.</text>
</comment>
<comment type="catalytic activity">
    <reaction evidence="1">
        <text>ATP + H2O + 4 H(+)(in) = ADP + phosphate + 5 H(+)(out)</text>
        <dbReference type="Rhea" id="RHEA:57720"/>
        <dbReference type="ChEBI" id="CHEBI:15377"/>
        <dbReference type="ChEBI" id="CHEBI:15378"/>
        <dbReference type="ChEBI" id="CHEBI:30616"/>
        <dbReference type="ChEBI" id="CHEBI:43474"/>
        <dbReference type="ChEBI" id="CHEBI:456216"/>
        <dbReference type="EC" id="7.1.2.2"/>
    </reaction>
</comment>
<comment type="subunit">
    <text evidence="1">F-type ATPases have 2 components, CF(1) - the catalytic core - and CF(0) - the membrane proton channel. CF(1) has five subunits: alpha(3), beta(3), gamma(1), delta(1), epsilon(1). CF(0) has three main subunits: a(1), b(2) and c(9-12). The alpha and beta chains form an alternating ring which encloses part of the gamma chain. CF(1) is attached to CF(0) by a central stalk formed by the gamma and epsilon chains, while a peripheral stalk is formed by the delta and b chains.</text>
</comment>
<comment type="subcellular location">
    <subcellularLocation>
        <location evidence="1">Cell inner membrane</location>
        <topology evidence="1">Peripheral membrane protein</topology>
    </subcellularLocation>
</comment>
<comment type="similarity">
    <text evidence="1">Belongs to the ATPase alpha/beta chains family.</text>
</comment>
<evidence type="ECO:0000255" key="1">
    <source>
        <dbReference type="HAMAP-Rule" id="MF_01347"/>
    </source>
</evidence>
<accession>B1LBB9</accession>
<feature type="chain" id="PRO_1000143557" description="ATP synthase subunit beta">
    <location>
        <begin position="1"/>
        <end position="468"/>
    </location>
</feature>
<feature type="binding site" evidence="1">
    <location>
        <begin position="155"/>
        <end position="162"/>
    </location>
    <ligand>
        <name>ATP</name>
        <dbReference type="ChEBI" id="CHEBI:30616"/>
    </ligand>
</feature>
<organism>
    <name type="scientific">Thermotoga sp. (strain RQ2)</name>
    <dbReference type="NCBI Taxonomy" id="126740"/>
    <lineage>
        <taxon>Bacteria</taxon>
        <taxon>Thermotogati</taxon>
        <taxon>Thermotogota</taxon>
        <taxon>Thermotogae</taxon>
        <taxon>Thermotogales</taxon>
        <taxon>Thermotogaceae</taxon>
        <taxon>Thermotoga</taxon>
    </lineage>
</organism>
<reference key="1">
    <citation type="journal article" date="2011" name="J. Bacteriol.">
        <title>Genome sequence of Thermotoga sp. strain RQ2, a hyperthermophilic bacterium isolated from a geothermally heated region of the seafloor near Ribeira Quente, the Azores.</title>
        <authorList>
            <person name="Swithers K.S."/>
            <person name="DiPippo J.L."/>
            <person name="Bruce D.C."/>
            <person name="Detter C."/>
            <person name="Tapia R."/>
            <person name="Han S."/>
            <person name="Saunders E."/>
            <person name="Goodwin L.A."/>
            <person name="Han J."/>
            <person name="Woyke T."/>
            <person name="Pitluck S."/>
            <person name="Pennacchio L."/>
            <person name="Nolan M."/>
            <person name="Mikhailova N."/>
            <person name="Lykidis A."/>
            <person name="Land M.L."/>
            <person name="Brettin T."/>
            <person name="Stetter K.O."/>
            <person name="Nelson K.E."/>
            <person name="Gogarten J.P."/>
            <person name="Noll K.M."/>
        </authorList>
    </citation>
    <scope>NUCLEOTIDE SEQUENCE [LARGE SCALE GENOMIC DNA]</scope>
    <source>
        <strain>RQ2</strain>
    </source>
</reference>
<sequence>MAKGSKGFIVSIMGPVVDVKFPEEELPDIYNALEVVNPQTGQKVVLEVEQLIGDGVVRTVAMDSTDGLTKGLEVVDTGAPITAPVGKEVLGRILNVIGEPVDEAGEIKAKERWPIHRPAPELVEQSTEIEILETGIKVIDLLAPFPKGGKIGFFGGAGVGKTVLVMELIRNIAIEHKGFSVFAGVGERTREGNELWLEMQESGVLGNTVLVFGQMNEPPGARFRVALTALTIAEYFRDVEGRDVLLFIDNIFRFVQAGSEVSALLGRMPSAVGYQPTLATDMGELQERITSTRRGSITSVQAIYVPADDITDPAPATTFAHLDATVVLSRRIAELGLYPAVDPLDSSSKILDPAIVGREHYEVARGVQEVLQRYKDLQDIIAILGVEELSPEDKLVVHRARRIQRFLSQPFHVAERFTGRPGRYVPIEETIRGFKEILDGKLDDVPEQAFLMAGNIDEVKERAKEMRS</sequence>
<dbReference type="EC" id="7.1.2.2" evidence="1"/>
<dbReference type="EMBL" id="CP000969">
    <property type="protein sequence ID" value="ACB09617.1"/>
    <property type="molecule type" value="Genomic_DNA"/>
</dbReference>
<dbReference type="RefSeq" id="WP_004082059.1">
    <property type="nucleotide sequence ID" value="NC_010483.1"/>
</dbReference>
<dbReference type="SMR" id="B1LBB9"/>
<dbReference type="KEGG" id="trq:TRQ2_1273"/>
<dbReference type="HOGENOM" id="CLU_022398_0_2_0"/>
<dbReference type="Proteomes" id="UP000001687">
    <property type="component" value="Chromosome"/>
</dbReference>
<dbReference type="GO" id="GO:0005886">
    <property type="term" value="C:plasma membrane"/>
    <property type="evidence" value="ECO:0007669"/>
    <property type="project" value="UniProtKB-SubCell"/>
</dbReference>
<dbReference type="GO" id="GO:0045259">
    <property type="term" value="C:proton-transporting ATP synthase complex"/>
    <property type="evidence" value="ECO:0007669"/>
    <property type="project" value="UniProtKB-KW"/>
</dbReference>
<dbReference type="GO" id="GO:0005524">
    <property type="term" value="F:ATP binding"/>
    <property type="evidence" value="ECO:0007669"/>
    <property type="project" value="UniProtKB-UniRule"/>
</dbReference>
<dbReference type="GO" id="GO:0016887">
    <property type="term" value="F:ATP hydrolysis activity"/>
    <property type="evidence" value="ECO:0007669"/>
    <property type="project" value="InterPro"/>
</dbReference>
<dbReference type="GO" id="GO:0046933">
    <property type="term" value="F:proton-transporting ATP synthase activity, rotational mechanism"/>
    <property type="evidence" value="ECO:0007669"/>
    <property type="project" value="UniProtKB-UniRule"/>
</dbReference>
<dbReference type="CDD" id="cd18110">
    <property type="entry name" value="ATP-synt_F1_beta_C"/>
    <property type="match status" value="1"/>
</dbReference>
<dbReference type="CDD" id="cd18115">
    <property type="entry name" value="ATP-synt_F1_beta_N"/>
    <property type="match status" value="1"/>
</dbReference>
<dbReference type="CDD" id="cd01133">
    <property type="entry name" value="F1-ATPase_beta_CD"/>
    <property type="match status" value="1"/>
</dbReference>
<dbReference type="FunFam" id="1.10.1140.10:FF:000001">
    <property type="entry name" value="ATP synthase subunit beta"/>
    <property type="match status" value="1"/>
</dbReference>
<dbReference type="FunFam" id="2.40.10.170:FF:000005">
    <property type="entry name" value="ATP synthase subunit beta"/>
    <property type="match status" value="1"/>
</dbReference>
<dbReference type="FunFam" id="3.40.50.300:FF:000026">
    <property type="entry name" value="ATP synthase subunit beta"/>
    <property type="match status" value="1"/>
</dbReference>
<dbReference type="Gene3D" id="2.40.10.170">
    <property type="match status" value="1"/>
</dbReference>
<dbReference type="Gene3D" id="1.10.1140.10">
    <property type="entry name" value="Bovine Mitochondrial F1-atpase, Atp Synthase Beta Chain, Chain D, domain 3"/>
    <property type="match status" value="1"/>
</dbReference>
<dbReference type="Gene3D" id="3.40.50.300">
    <property type="entry name" value="P-loop containing nucleotide triphosphate hydrolases"/>
    <property type="match status" value="1"/>
</dbReference>
<dbReference type="HAMAP" id="MF_01347">
    <property type="entry name" value="ATP_synth_beta_bact"/>
    <property type="match status" value="1"/>
</dbReference>
<dbReference type="InterPro" id="IPR003593">
    <property type="entry name" value="AAA+_ATPase"/>
</dbReference>
<dbReference type="InterPro" id="IPR055190">
    <property type="entry name" value="ATP-synt_VA_C"/>
</dbReference>
<dbReference type="InterPro" id="IPR005722">
    <property type="entry name" value="ATP_synth_F1_bsu"/>
</dbReference>
<dbReference type="InterPro" id="IPR020003">
    <property type="entry name" value="ATPase_a/bsu_AS"/>
</dbReference>
<dbReference type="InterPro" id="IPR050053">
    <property type="entry name" value="ATPase_alpha/beta_chains"/>
</dbReference>
<dbReference type="InterPro" id="IPR004100">
    <property type="entry name" value="ATPase_F1/V1/A1_a/bsu_N"/>
</dbReference>
<dbReference type="InterPro" id="IPR036121">
    <property type="entry name" value="ATPase_F1/V1/A1_a/bsu_N_sf"/>
</dbReference>
<dbReference type="InterPro" id="IPR000194">
    <property type="entry name" value="ATPase_F1/V1/A1_a/bsu_nucl-bd"/>
</dbReference>
<dbReference type="InterPro" id="IPR024034">
    <property type="entry name" value="ATPase_F1/V1_b/a_C"/>
</dbReference>
<dbReference type="InterPro" id="IPR027417">
    <property type="entry name" value="P-loop_NTPase"/>
</dbReference>
<dbReference type="NCBIfam" id="TIGR01039">
    <property type="entry name" value="atpD"/>
    <property type="match status" value="1"/>
</dbReference>
<dbReference type="PANTHER" id="PTHR15184">
    <property type="entry name" value="ATP SYNTHASE"/>
    <property type="match status" value="1"/>
</dbReference>
<dbReference type="PANTHER" id="PTHR15184:SF71">
    <property type="entry name" value="ATP SYNTHASE SUBUNIT BETA, MITOCHONDRIAL"/>
    <property type="match status" value="1"/>
</dbReference>
<dbReference type="Pfam" id="PF00006">
    <property type="entry name" value="ATP-synt_ab"/>
    <property type="match status" value="1"/>
</dbReference>
<dbReference type="Pfam" id="PF02874">
    <property type="entry name" value="ATP-synt_ab_N"/>
    <property type="match status" value="1"/>
</dbReference>
<dbReference type="Pfam" id="PF22919">
    <property type="entry name" value="ATP-synt_VA_C"/>
    <property type="match status" value="1"/>
</dbReference>
<dbReference type="SMART" id="SM00382">
    <property type="entry name" value="AAA"/>
    <property type="match status" value="1"/>
</dbReference>
<dbReference type="SUPFAM" id="SSF47917">
    <property type="entry name" value="C-terminal domain of alpha and beta subunits of F1 ATP synthase"/>
    <property type="match status" value="1"/>
</dbReference>
<dbReference type="SUPFAM" id="SSF50615">
    <property type="entry name" value="N-terminal domain of alpha and beta subunits of F1 ATP synthase"/>
    <property type="match status" value="1"/>
</dbReference>
<dbReference type="SUPFAM" id="SSF52540">
    <property type="entry name" value="P-loop containing nucleoside triphosphate hydrolases"/>
    <property type="match status" value="1"/>
</dbReference>
<dbReference type="PROSITE" id="PS00152">
    <property type="entry name" value="ATPASE_ALPHA_BETA"/>
    <property type="match status" value="1"/>
</dbReference>
<name>ATPB_THESQ</name>
<proteinExistence type="inferred from homology"/>